<feature type="chain" id="PRO_0000242244" description="Phosphomethylpyrimidine synthase">
    <location>
        <begin position="1"/>
        <end position="637"/>
    </location>
</feature>
<feature type="binding site" evidence="1">
    <location>
        <position position="242"/>
    </location>
    <ligand>
        <name>substrate</name>
    </ligand>
</feature>
<feature type="binding site" evidence="1">
    <location>
        <position position="271"/>
    </location>
    <ligand>
        <name>substrate</name>
    </ligand>
</feature>
<feature type="binding site" evidence="1">
    <location>
        <position position="300"/>
    </location>
    <ligand>
        <name>substrate</name>
    </ligand>
</feature>
<feature type="binding site" evidence="1">
    <location>
        <position position="336"/>
    </location>
    <ligand>
        <name>substrate</name>
    </ligand>
</feature>
<feature type="binding site" evidence="1">
    <location>
        <begin position="356"/>
        <end position="358"/>
    </location>
    <ligand>
        <name>substrate</name>
    </ligand>
</feature>
<feature type="binding site" evidence="1">
    <location>
        <begin position="397"/>
        <end position="400"/>
    </location>
    <ligand>
        <name>substrate</name>
    </ligand>
</feature>
<feature type="binding site" evidence="1">
    <location>
        <position position="436"/>
    </location>
    <ligand>
        <name>substrate</name>
    </ligand>
</feature>
<feature type="binding site" evidence="1">
    <location>
        <position position="440"/>
    </location>
    <ligand>
        <name>Zn(2+)</name>
        <dbReference type="ChEBI" id="CHEBI:29105"/>
    </ligand>
</feature>
<feature type="binding site" evidence="1">
    <location>
        <position position="463"/>
    </location>
    <ligand>
        <name>substrate</name>
    </ligand>
</feature>
<feature type="binding site" evidence="1">
    <location>
        <position position="504"/>
    </location>
    <ligand>
        <name>Zn(2+)</name>
        <dbReference type="ChEBI" id="CHEBI:29105"/>
    </ligand>
</feature>
<feature type="binding site" evidence="1">
    <location>
        <position position="584"/>
    </location>
    <ligand>
        <name>[4Fe-4S] cluster</name>
        <dbReference type="ChEBI" id="CHEBI:49883"/>
        <note>4Fe-4S-S-AdoMet</note>
    </ligand>
</feature>
<feature type="binding site" evidence="1">
    <location>
        <position position="587"/>
    </location>
    <ligand>
        <name>[4Fe-4S] cluster</name>
        <dbReference type="ChEBI" id="CHEBI:49883"/>
        <note>4Fe-4S-S-AdoMet</note>
    </ligand>
</feature>
<feature type="binding site" evidence="1">
    <location>
        <position position="592"/>
    </location>
    <ligand>
        <name>[4Fe-4S] cluster</name>
        <dbReference type="ChEBI" id="CHEBI:49883"/>
        <note>4Fe-4S-S-AdoMet</note>
    </ligand>
</feature>
<keyword id="KW-0004">4Fe-4S</keyword>
<keyword id="KW-0408">Iron</keyword>
<keyword id="KW-0411">Iron-sulfur</keyword>
<keyword id="KW-0456">Lyase</keyword>
<keyword id="KW-0479">Metal-binding</keyword>
<keyword id="KW-1185">Reference proteome</keyword>
<keyword id="KW-0949">S-adenosyl-L-methionine</keyword>
<keyword id="KW-0784">Thiamine biosynthesis</keyword>
<keyword id="KW-0862">Zinc</keyword>
<accession>Q2L083</accession>
<organism>
    <name type="scientific">Bordetella avium (strain 197N)</name>
    <dbReference type="NCBI Taxonomy" id="360910"/>
    <lineage>
        <taxon>Bacteria</taxon>
        <taxon>Pseudomonadati</taxon>
        <taxon>Pseudomonadota</taxon>
        <taxon>Betaproteobacteria</taxon>
        <taxon>Burkholderiales</taxon>
        <taxon>Alcaligenaceae</taxon>
        <taxon>Bordetella</taxon>
    </lineage>
</organism>
<name>THIC_BORA1</name>
<evidence type="ECO:0000255" key="1">
    <source>
        <dbReference type="HAMAP-Rule" id="MF_00089"/>
    </source>
</evidence>
<comment type="function">
    <text evidence="1">Catalyzes the synthesis of the hydroxymethylpyrimidine phosphate (HMP-P) moiety of thiamine from aminoimidazole ribotide (AIR) in a radical S-adenosyl-L-methionine (SAM)-dependent reaction.</text>
</comment>
<comment type="catalytic activity">
    <reaction evidence="1">
        <text>5-amino-1-(5-phospho-beta-D-ribosyl)imidazole + S-adenosyl-L-methionine = 4-amino-2-methyl-5-(phosphooxymethyl)pyrimidine + CO + 5'-deoxyadenosine + formate + L-methionine + 3 H(+)</text>
        <dbReference type="Rhea" id="RHEA:24840"/>
        <dbReference type="ChEBI" id="CHEBI:15378"/>
        <dbReference type="ChEBI" id="CHEBI:15740"/>
        <dbReference type="ChEBI" id="CHEBI:17245"/>
        <dbReference type="ChEBI" id="CHEBI:17319"/>
        <dbReference type="ChEBI" id="CHEBI:57844"/>
        <dbReference type="ChEBI" id="CHEBI:58354"/>
        <dbReference type="ChEBI" id="CHEBI:59789"/>
        <dbReference type="ChEBI" id="CHEBI:137981"/>
        <dbReference type="EC" id="4.1.99.17"/>
    </reaction>
</comment>
<comment type="cofactor">
    <cofactor evidence="1">
        <name>[4Fe-4S] cluster</name>
        <dbReference type="ChEBI" id="CHEBI:49883"/>
    </cofactor>
    <text evidence="1">Binds 1 [4Fe-4S] cluster per subunit. The cluster is coordinated with 3 cysteines and an exchangeable S-adenosyl-L-methionine.</text>
</comment>
<comment type="pathway">
    <text evidence="1">Cofactor biosynthesis; thiamine diphosphate biosynthesis.</text>
</comment>
<comment type="subunit">
    <text evidence="1">Homodimer.</text>
</comment>
<comment type="similarity">
    <text evidence="1">Belongs to the ThiC family.</text>
</comment>
<sequence length="637" mass="71112">MNANPKFLAATAEVDAAAVAPLPKSRKIYETGSRPDIRVPFREIEQQDTPTMFGGERNPPLTVYDTSGPYTDPQAHIDIRRGLPELRRAWIEERGDVELLAGPTSDYGRARLQDPQLTAMRFDLRRPPRRAKDGANVTQMHYARRGIVTPEMEYVAIRESLRREHYIESLRASGPEGEKMARRLLRQHPGQSFGAAIPAAITPEFVRDEIARGRAIIPANINHPEVEPMIIGRNFLVKINANIGNSAVSSGIGEEVEKMTWAIRWGGDTVMDLSTGKHIHETREWIIRNSPVPIGTVPIYQALEKVDGKAEALTWEIFRDTLIEQAEQGVDYFTIHAGVRLPFIPMTADRMTGIVSRGGSIMAKWCLAHHKESFLYERFEEICEIMKAYDVSFSLGDGLRPGSGYDANDEAQFAELKTLGELTQVAWKHDVQVMIEGPGHVPMQMIKENMELQLEHCHEAPFYTLGPLTTDIAPGYDHITSGIGAALIGWYGTAMLCYVTPKEHLGLPNKKDVKDGIITYKIAAHAADLAKGHPGAAVRDNALSKARFEFRWDDQFNLGLDPDTAKEFHDETLPKDSMKVAHFCSMCGPHFCSMKITQDVREYAASQGVSAQQALTQGMQEKAIEFVKKGAEVYHRS</sequence>
<protein>
    <recommendedName>
        <fullName evidence="1">Phosphomethylpyrimidine synthase</fullName>
        <ecNumber evidence="1">4.1.99.17</ecNumber>
    </recommendedName>
    <alternativeName>
        <fullName evidence="1">Hydroxymethylpyrimidine phosphate synthase</fullName>
        <shortName evidence="1">HMP-P synthase</shortName>
        <shortName evidence="1">HMP-phosphate synthase</shortName>
        <shortName evidence="1">HMPP synthase</shortName>
    </alternativeName>
    <alternativeName>
        <fullName evidence="1">Thiamine biosynthesis protein ThiC</fullName>
    </alternativeName>
</protein>
<dbReference type="EC" id="4.1.99.17" evidence="1"/>
<dbReference type="EMBL" id="AM167904">
    <property type="protein sequence ID" value="CAJ47856.1"/>
    <property type="molecule type" value="Genomic_DNA"/>
</dbReference>
<dbReference type="RefSeq" id="WP_012415954.1">
    <property type="nucleotide sequence ID" value="NC_010645.1"/>
</dbReference>
<dbReference type="SMR" id="Q2L083"/>
<dbReference type="STRING" id="360910.BAV0251"/>
<dbReference type="GeneID" id="92936501"/>
<dbReference type="KEGG" id="bav:BAV0251"/>
<dbReference type="eggNOG" id="COG0422">
    <property type="taxonomic scope" value="Bacteria"/>
</dbReference>
<dbReference type="HOGENOM" id="CLU_013181_2_1_4"/>
<dbReference type="OrthoDB" id="9805897at2"/>
<dbReference type="UniPathway" id="UPA00060"/>
<dbReference type="Proteomes" id="UP000001977">
    <property type="component" value="Chromosome"/>
</dbReference>
<dbReference type="GO" id="GO:0005829">
    <property type="term" value="C:cytosol"/>
    <property type="evidence" value="ECO:0007669"/>
    <property type="project" value="TreeGrafter"/>
</dbReference>
<dbReference type="GO" id="GO:0051539">
    <property type="term" value="F:4 iron, 4 sulfur cluster binding"/>
    <property type="evidence" value="ECO:0007669"/>
    <property type="project" value="UniProtKB-KW"/>
</dbReference>
<dbReference type="GO" id="GO:0016830">
    <property type="term" value="F:carbon-carbon lyase activity"/>
    <property type="evidence" value="ECO:0007669"/>
    <property type="project" value="InterPro"/>
</dbReference>
<dbReference type="GO" id="GO:0008270">
    <property type="term" value="F:zinc ion binding"/>
    <property type="evidence" value="ECO:0007669"/>
    <property type="project" value="UniProtKB-UniRule"/>
</dbReference>
<dbReference type="GO" id="GO:0009228">
    <property type="term" value="P:thiamine biosynthetic process"/>
    <property type="evidence" value="ECO:0007669"/>
    <property type="project" value="UniProtKB-KW"/>
</dbReference>
<dbReference type="GO" id="GO:0009229">
    <property type="term" value="P:thiamine diphosphate biosynthetic process"/>
    <property type="evidence" value="ECO:0007669"/>
    <property type="project" value="UniProtKB-UniRule"/>
</dbReference>
<dbReference type="FunFam" id="3.20.20.540:FF:000001">
    <property type="entry name" value="Phosphomethylpyrimidine synthase"/>
    <property type="match status" value="1"/>
</dbReference>
<dbReference type="Gene3D" id="6.10.250.620">
    <property type="match status" value="1"/>
</dbReference>
<dbReference type="Gene3D" id="3.20.20.540">
    <property type="entry name" value="Radical SAM ThiC family, central domain"/>
    <property type="match status" value="1"/>
</dbReference>
<dbReference type="HAMAP" id="MF_00089">
    <property type="entry name" value="ThiC"/>
    <property type="match status" value="1"/>
</dbReference>
<dbReference type="InterPro" id="IPR037509">
    <property type="entry name" value="ThiC"/>
</dbReference>
<dbReference type="InterPro" id="IPR025747">
    <property type="entry name" value="ThiC-associated_dom"/>
</dbReference>
<dbReference type="InterPro" id="IPR038521">
    <property type="entry name" value="ThiC/Bza_core_dom"/>
</dbReference>
<dbReference type="InterPro" id="IPR002817">
    <property type="entry name" value="ThiC/BzaA/B"/>
</dbReference>
<dbReference type="NCBIfam" id="NF006763">
    <property type="entry name" value="PRK09284.1"/>
    <property type="match status" value="1"/>
</dbReference>
<dbReference type="NCBIfam" id="NF009895">
    <property type="entry name" value="PRK13352.1"/>
    <property type="match status" value="1"/>
</dbReference>
<dbReference type="NCBIfam" id="TIGR00190">
    <property type="entry name" value="thiC"/>
    <property type="match status" value="1"/>
</dbReference>
<dbReference type="PANTHER" id="PTHR30557:SF1">
    <property type="entry name" value="PHOSPHOMETHYLPYRIMIDINE SYNTHASE, CHLOROPLASTIC"/>
    <property type="match status" value="1"/>
</dbReference>
<dbReference type="PANTHER" id="PTHR30557">
    <property type="entry name" value="THIAMINE BIOSYNTHESIS PROTEIN THIC"/>
    <property type="match status" value="1"/>
</dbReference>
<dbReference type="Pfam" id="PF13667">
    <property type="entry name" value="ThiC-associated"/>
    <property type="match status" value="1"/>
</dbReference>
<dbReference type="Pfam" id="PF01964">
    <property type="entry name" value="ThiC_Rad_SAM"/>
    <property type="match status" value="1"/>
</dbReference>
<dbReference type="SFLD" id="SFLDF00407">
    <property type="entry name" value="phosphomethylpyrimidine_syntha"/>
    <property type="match status" value="1"/>
</dbReference>
<dbReference type="SFLD" id="SFLDG01114">
    <property type="entry name" value="phosphomethylpyrimidine_syntha"/>
    <property type="match status" value="1"/>
</dbReference>
<dbReference type="SFLD" id="SFLDS00113">
    <property type="entry name" value="Radical_SAM_Phosphomethylpyrim"/>
    <property type="match status" value="1"/>
</dbReference>
<reference key="1">
    <citation type="journal article" date="2006" name="J. Bacteriol.">
        <title>Comparison of the genome sequence of the poultry pathogen Bordetella avium with those of B. bronchiseptica, B. pertussis, and B. parapertussis reveals extensive diversity in surface structures associated with host interaction.</title>
        <authorList>
            <person name="Sebaihia M."/>
            <person name="Preston A."/>
            <person name="Maskell D.J."/>
            <person name="Kuzmiak H."/>
            <person name="Connell T.D."/>
            <person name="King N.D."/>
            <person name="Orndorff P.E."/>
            <person name="Miyamoto D.M."/>
            <person name="Thomson N.R."/>
            <person name="Harris D."/>
            <person name="Goble A."/>
            <person name="Lord A."/>
            <person name="Murphy L."/>
            <person name="Quail M.A."/>
            <person name="Rutter S."/>
            <person name="Squares R."/>
            <person name="Squares S."/>
            <person name="Woodward J."/>
            <person name="Parkhill J."/>
            <person name="Temple L.M."/>
        </authorList>
    </citation>
    <scope>NUCLEOTIDE SEQUENCE [LARGE SCALE GENOMIC DNA]</scope>
    <source>
        <strain>197N</strain>
    </source>
</reference>
<gene>
    <name evidence="1" type="primary">thiC</name>
    <name type="ordered locus">BAV0251</name>
</gene>
<proteinExistence type="inferred from homology"/>